<reference key="1">
    <citation type="journal article" date="2008" name="Appl. Environ. Microbiol.">
        <title>The genome sequence of the metal-mobilizing, extremely thermoacidophilic archaeon Metallosphaera sedula provides insights into bioleaching-associated metabolism.</title>
        <authorList>
            <person name="Auernik K.S."/>
            <person name="Maezato Y."/>
            <person name="Blum P.H."/>
            <person name="Kelly R.M."/>
        </authorList>
    </citation>
    <scope>NUCLEOTIDE SEQUENCE [LARGE SCALE GENOMIC DNA]</scope>
    <source>
        <strain>ATCC 51363 / DSM 5348 / JCM 9185 / NBRC 15509 / TH2</strain>
    </source>
</reference>
<keyword id="KW-0028">Amino-acid biosynthesis</keyword>
<keyword id="KW-0055">Arginine biosynthesis</keyword>
<keyword id="KW-0067">ATP-binding</keyword>
<keyword id="KW-0963">Cytoplasm</keyword>
<keyword id="KW-0436">Ligase</keyword>
<keyword id="KW-0547">Nucleotide-binding</keyword>
<keyword id="KW-1185">Reference proteome</keyword>
<accession>A4YI75</accession>
<organism>
    <name type="scientific">Metallosphaera sedula (strain ATCC 51363 / DSM 5348 / JCM 9185 / NBRC 15509 / TH2)</name>
    <dbReference type="NCBI Taxonomy" id="399549"/>
    <lineage>
        <taxon>Archaea</taxon>
        <taxon>Thermoproteota</taxon>
        <taxon>Thermoprotei</taxon>
        <taxon>Sulfolobales</taxon>
        <taxon>Sulfolobaceae</taxon>
        <taxon>Metallosphaera</taxon>
    </lineage>
</organism>
<sequence>MKIVLAYSGGLDTTVAIKWLSETFHAEVISVSVDVGQKDDFKKIEERAYKAGSAKHYLVDAKREFAENFALKDIKMNGLYEEVYPLATALARPLIAEKVAEVAKKEGTEYVAHGSTSKGNDQVRFDLALKTALDNVKIIAPARIWKMTREDEIAYARERGIPIKTESSKYSIDENLWGRSIEGDIISDPASEVPEDAFEWTAVRKQDKLKLSVEFEKGVPVRVNGEKLDPVKLISLLNEEVGSRGFGRVEHLENRVVGFKSREVYEAPAALALIAAHKDLEKTVLTPLELRFKRHLDSLWSDLVYQGLWYEPLRNTLELAGDEINKWVSGEVKLEVDLKSLRVVGRTSPYSPYSEKISSYNKGWYPSDEEARGFIEIWGMHSLLTRKARYG</sequence>
<evidence type="ECO:0000255" key="1">
    <source>
        <dbReference type="HAMAP-Rule" id="MF_00005"/>
    </source>
</evidence>
<gene>
    <name evidence="1" type="primary">argG</name>
    <name type="ordered locus">Msed_1987</name>
</gene>
<comment type="catalytic activity">
    <reaction evidence="1">
        <text>L-citrulline + L-aspartate + ATP = 2-(N(omega)-L-arginino)succinate + AMP + diphosphate + H(+)</text>
        <dbReference type="Rhea" id="RHEA:10932"/>
        <dbReference type="ChEBI" id="CHEBI:15378"/>
        <dbReference type="ChEBI" id="CHEBI:29991"/>
        <dbReference type="ChEBI" id="CHEBI:30616"/>
        <dbReference type="ChEBI" id="CHEBI:33019"/>
        <dbReference type="ChEBI" id="CHEBI:57472"/>
        <dbReference type="ChEBI" id="CHEBI:57743"/>
        <dbReference type="ChEBI" id="CHEBI:456215"/>
        <dbReference type="EC" id="6.3.4.5"/>
    </reaction>
</comment>
<comment type="pathway">
    <text evidence="1">Amino-acid biosynthesis; L-arginine biosynthesis; L-arginine from L-ornithine and carbamoyl phosphate: step 2/3.</text>
</comment>
<comment type="subunit">
    <text evidence="1">Homotetramer.</text>
</comment>
<comment type="subcellular location">
    <subcellularLocation>
        <location evidence="1">Cytoplasm</location>
    </subcellularLocation>
</comment>
<comment type="similarity">
    <text evidence="1">Belongs to the argininosuccinate synthase family. Type 1 subfamily.</text>
</comment>
<dbReference type="EC" id="6.3.4.5" evidence="1"/>
<dbReference type="EMBL" id="CP000682">
    <property type="protein sequence ID" value="ABP96127.1"/>
    <property type="molecule type" value="Genomic_DNA"/>
</dbReference>
<dbReference type="RefSeq" id="WP_012021914.1">
    <property type="nucleotide sequence ID" value="NC_009440.1"/>
</dbReference>
<dbReference type="SMR" id="A4YI75"/>
<dbReference type="STRING" id="399549.Msed_1987"/>
<dbReference type="GeneID" id="91756519"/>
<dbReference type="KEGG" id="mse:Msed_1987"/>
<dbReference type="eggNOG" id="arCOG00112">
    <property type="taxonomic scope" value="Archaea"/>
</dbReference>
<dbReference type="HOGENOM" id="CLU_032784_4_2_2"/>
<dbReference type="UniPathway" id="UPA00068">
    <property type="reaction ID" value="UER00113"/>
</dbReference>
<dbReference type="Proteomes" id="UP000000242">
    <property type="component" value="Chromosome"/>
</dbReference>
<dbReference type="GO" id="GO:0005737">
    <property type="term" value="C:cytoplasm"/>
    <property type="evidence" value="ECO:0007669"/>
    <property type="project" value="UniProtKB-SubCell"/>
</dbReference>
<dbReference type="GO" id="GO:0004055">
    <property type="term" value="F:argininosuccinate synthase activity"/>
    <property type="evidence" value="ECO:0007669"/>
    <property type="project" value="UniProtKB-UniRule"/>
</dbReference>
<dbReference type="GO" id="GO:0005524">
    <property type="term" value="F:ATP binding"/>
    <property type="evidence" value="ECO:0007669"/>
    <property type="project" value="UniProtKB-UniRule"/>
</dbReference>
<dbReference type="GO" id="GO:0000053">
    <property type="term" value="P:argininosuccinate metabolic process"/>
    <property type="evidence" value="ECO:0007669"/>
    <property type="project" value="TreeGrafter"/>
</dbReference>
<dbReference type="GO" id="GO:0006526">
    <property type="term" value="P:L-arginine biosynthetic process"/>
    <property type="evidence" value="ECO:0007669"/>
    <property type="project" value="UniProtKB-UniRule"/>
</dbReference>
<dbReference type="GO" id="GO:0000050">
    <property type="term" value="P:urea cycle"/>
    <property type="evidence" value="ECO:0007669"/>
    <property type="project" value="TreeGrafter"/>
</dbReference>
<dbReference type="CDD" id="cd01999">
    <property type="entry name" value="ASS"/>
    <property type="match status" value="1"/>
</dbReference>
<dbReference type="FunFam" id="3.40.50.620:FF:000019">
    <property type="entry name" value="Argininosuccinate synthase"/>
    <property type="match status" value="1"/>
</dbReference>
<dbReference type="FunFam" id="3.90.1260.10:FF:000007">
    <property type="entry name" value="Argininosuccinate synthase"/>
    <property type="match status" value="1"/>
</dbReference>
<dbReference type="Gene3D" id="3.90.1260.10">
    <property type="entry name" value="Argininosuccinate synthetase, chain A, domain 2"/>
    <property type="match status" value="1"/>
</dbReference>
<dbReference type="Gene3D" id="3.40.50.620">
    <property type="entry name" value="HUPs"/>
    <property type="match status" value="1"/>
</dbReference>
<dbReference type="HAMAP" id="MF_00005">
    <property type="entry name" value="Arg_succ_synth_type1"/>
    <property type="match status" value="1"/>
</dbReference>
<dbReference type="InterPro" id="IPR048268">
    <property type="entry name" value="Arginosuc_syn_C"/>
</dbReference>
<dbReference type="InterPro" id="IPR048267">
    <property type="entry name" value="Arginosuc_syn_N"/>
</dbReference>
<dbReference type="InterPro" id="IPR001518">
    <property type="entry name" value="Arginosuc_synth"/>
</dbReference>
<dbReference type="InterPro" id="IPR018223">
    <property type="entry name" value="Arginosuc_synth_CS"/>
</dbReference>
<dbReference type="InterPro" id="IPR023434">
    <property type="entry name" value="Arginosuc_synth_type_1_subfam"/>
</dbReference>
<dbReference type="InterPro" id="IPR024074">
    <property type="entry name" value="AS_cat/multimer_dom_body"/>
</dbReference>
<dbReference type="InterPro" id="IPR014729">
    <property type="entry name" value="Rossmann-like_a/b/a_fold"/>
</dbReference>
<dbReference type="NCBIfam" id="TIGR00032">
    <property type="entry name" value="argG"/>
    <property type="match status" value="1"/>
</dbReference>
<dbReference type="NCBIfam" id="NF001770">
    <property type="entry name" value="PRK00509.1"/>
    <property type="match status" value="1"/>
</dbReference>
<dbReference type="PANTHER" id="PTHR11587">
    <property type="entry name" value="ARGININOSUCCINATE SYNTHASE"/>
    <property type="match status" value="1"/>
</dbReference>
<dbReference type="PANTHER" id="PTHR11587:SF2">
    <property type="entry name" value="ARGININOSUCCINATE SYNTHASE"/>
    <property type="match status" value="1"/>
</dbReference>
<dbReference type="Pfam" id="PF20979">
    <property type="entry name" value="Arginosuc_syn_C"/>
    <property type="match status" value="1"/>
</dbReference>
<dbReference type="Pfam" id="PF00764">
    <property type="entry name" value="Arginosuc_synth"/>
    <property type="match status" value="1"/>
</dbReference>
<dbReference type="SUPFAM" id="SSF52402">
    <property type="entry name" value="Adenine nucleotide alpha hydrolases-like"/>
    <property type="match status" value="1"/>
</dbReference>
<dbReference type="SUPFAM" id="SSF69864">
    <property type="entry name" value="Argininosuccinate synthetase, C-terminal domain"/>
    <property type="match status" value="1"/>
</dbReference>
<dbReference type="PROSITE" id="PS00564">
    <property type="entry name" value="ARGININOSUCCIN_SYN_1"/>
    <property type="match status" value="1"/>
</dbReference>
<dbReference type="PROSITE" id="PS00565">
    <property type="entry name" value="ARGININOSUCCIN_SYN_2"/>
    <property type="match status" value="1"/>
</dbReference>
<protein>
    <recommendedName>
        <fullName evidence="1">Argininosuccinate synthase</fullName>
        <ecNumber evidence="1">6.3.4.5</ecNumber>
    </recommendedName>
    <alternativeName>
        <fullName evidence="1">Citrulline--aspartate ligase</fullName>
    </alternativeName>
</protein>
<feature type="chain" id="PRO_1000070914" description="Argininosuccinate synthase">
    <location>
        <begin position="1"/>
        <end position="391"/>
    </location>
</feature>
<feature type="binding site" evidence="1">
    <location>
        <begin position="6"/>
        <end position="14"/>
    </location>
    <ligand>
        <name>ATP</name>
        <dbReference type="ChEBI" id="CHEBI:30616"/>
    </ligand>
</feature>
<feature type="binding site" evidence="1">
    <location>
        <position position="84"/>
    </location>
    <ligand>
        <name>L-citrulline</name>
        <dbReference type="ChEBI" id="CHEBI:57743"/>
    </ligand>
</feature>
<feature type="binding site" evidence="1">
    <location>
        <position position="114"/>
    </location>
    <ligand>
        <name>ATP</name>
        <dbReference type="ChEBI" id="CHEBI:30616"/>
    </ligand>
</feature>
<feature type="binding site" evidence="1">
    <location>
        <position position="116"/>
    </location>
    <ligand>
        <name>L-aspartate</name>
        <dbReference type="ChEBI" id="CHEBI:29991"/>
    </ligand>
</feature>
<feature type="binding site" evidence="1">
    <location>
        <position position="120"/>
    </location>
    <ligand>
        <name>L-aspartate</name>
        <dbReference type="ChEBI" id="CHEBI:29991"/>
    </ligand>
</feature>
<feature type="binding site" evidence="1">
    <location>
        <position position="120"/>
    </location>
    <ligand>
        <name>L-citrulline</name>
        <dbReference type="ChEBI" id="CHEBI:57743"/>
    </ligand>
</feature>
<feature type="binding site" evidence="1">
    <location>
        <position position="121"/>
    </location>
    <ligand>
        <name>L-aspartate</name>
        <dbReference type="ChEBI" id="CHEBI:29991"/>
    </ligand>
</feature>
<feature type="binding site" evidence="1">
    <location>
        <position position="124"/>
    </location>
    <ligand>
        <name>L-citrulline</name>
        <dbReference type="ChEBI" id="CHEBI:57743"/>
    </ligand>
</feature>
<feature type="binding site" evidence="1">
    <location>
        <position position="171"/>
    </location>
    <ligand>
        <name>L-citrulline</name>
        <dbReference type="ChEBI" id="CHEBI:57743"/>
    </ligand>
</feature>
<feature type="binding site" evidence="1">
    <location>
        <position position="180"/>
    </location>
    <ligand>
        <name>L-citrulline</name>
        <dbReference type="ChEBI" id="CHEBI:57743"/>
    </ligand>
</feature>
<feature type="binding site" evidence="1">
    <location>
        <position position="253"/>
    </location>
    <ligand>
        <name>L-citrulline</name>
        <dbReference type="ChEBI" id="CHEBI:57743"/>
    </ligand>
</feature>
<feature type="binding site" evidence="1">
    <location>
        <position position="265"/>
    </location>
    <ligand>
        <name>L-citrulline</name>
        <dbReference type="ChEBI" id="CHEBI:57743"/>
    </ligand>
</feature>
<proteinExistence type="inferred from homology"/>
<name>ASSY_METS5</name>